<comment type="subcellular location">
    <subcellularLocation>
        <location evidence="1">Cell membrane</location>
        <topology evidence="1">Single-pass membrane protein</topology>
    </subcellularLocation>
</comment>
<comment type="similarity">
    <text evidence="1">Belongs to the UPF0370 family.</text>
</comment>
<sequence length="66" mass="8071">MDWLAKYWWILVIVFLVGVLLNVIKDLKRVDHKKFLANKPELPPHRDFNDKWDDDDDWPKKDQPKK</sequence>
<dbReference type="EMBL" id="CP001164">
    <property type="protein sequence ID" value="ACI37248.1"/>
    <property type="molecule type" value="Genomic_DNA"/>
</dbReference>
<dbReference type="RefSeq" id="WP_000383836.1">
    <property type="nucleotide sequence ID" value="NC_011353.1"/>
</dbReference>
<dbReference type="SMR" id="B5Z009"/>
<dbReference type="KEGG" id="ecf:ECH74115_3694"/>
<dbReference type="HOGENOM" id="CLU_198936_0_0_6"/>
<dbReference type="GO" id="GO:0005886">
    <property type="term" value="C:plasma membrane"/>
    <property type="evidence" value="ECO:0007669"/>
    <property type="project" value="UniProtKB-SubCell"/>
</dbReference>
<dbReference type="HAMAP" id="MF_01566">
    <property type="entry name" value="UPF0370"/>
    <property type="match status" value="1"/>
</dbReference>
<dbReference type="InterPro" id="IPR020910">
    <property type="entry name" value="UPF0370"/>
</dbReference>
<dbReference type="NCBIfam" id="NF010185">
    <property type="entry name" value="PRK13664.1"/>
    <property type="match status" value="1"/>
</dbReference>
<dbReference type="Pfam" id="PF13980">
    <property type="entry name" value="UPF0370"/>
    <property type="match status" value="1"/>
</dbReference>
<proteinExistence type="inferred from homology"/>
<accession>B5Z009</accession>
<name>YPFN_ECO5E</name>
<evidence type="ECO:0000255" key="1">
    <source>
        <dbReference type="HAMAP-Rule" id="MF_01566"/>
    </source>
</evidence>
<evidence type="ECO:0000256" key="2">
    <source>
        <dbReference type="SAM" id="MobiDB-lite"/>
    </source>
</evidence>
<protein>
    <recommendedName>
        <fullName evidence="1">UPF0370 protein YpfN</fullName>
    </recommendedName>
</protein>
<feature type="chain" id="PRO_1000199721" description="UPF0370 protein YpfN">
    <location>
        <begin position="1"/>
        <end position="66"/>
    </location>
</feature>
<feature type="transmembrane region" description="Helical" evidence="1">
    <location>
        <begin position="4"/>
        <end position="24"/>
    </location>
</feature>
<feature type="region of interest" description="Disordered" evidence="2">
    <location>
        <begin position="39"/>
        <end position="66"/>
    </location>
</feature>
<feature type="compositionally biased region" description="Basic and acidic residues" evidence="2">
    <location>
        <begin position="42"/>
        <end position="51"/>
    </location>
</feature>
<organism>
    <name type="scientific">Escherichia coli O157:H7 (strain EC4115 / EHEC)</name>
    <dbReference type="NCBI Taxonomy" id="444450"/>
    <lineage>
        <taxon>Bacteria</taxon>
        <taxon>Pseudomonadati</taxon>
        <taxon>Pseudomonadota</taxon>
        <taxon>Gammaproteobacteria</taxon>
        <taxon>Enterobacterales</taxon>
        <taxon>Enterobacteriaceae</taxon>
        <taxon>Escherichia</taxon>
    </lineage>
</organism>
<gene>
    <name evidence="1" type="primary">ypfN</name>
    <name type="ordered locus">ECH74115_3694</name>
</gene>
<reference key="1">
    <citation type="journal article" date="2011" name="Proc. Natl. Acad. Sci. U.S.A.">
        <title>Genomic anatomy of Escherichia coli O157:H7 outbreaks.</title>
        <authorList>
            <person name="Eppinger M."/>
            <person name="Mammel M.K."/>
            <person name="Leclerc J.E."/>
            <person name="Ravel J."/>
            <person name="Cebula T.A."/>
        </authorList>
    </citation>
    <scope>NUCLEOTIDE SEQUENCE [LARGE SCALE GENOMIC DNA]</scope>
    <source>
        <strain>EC4115 / EHEC</strain>
    </source>
</reference>
<keyword id="KW-1003">Cell membrane</keyword>
<keyword id="KW-0472">Membrane</keyword>
<keyword id="KW-0812">Transmembrane</keyword>
<keyword id="KW-1133">Transmembrane helix</keyword>